<protein>
    <recommendedName>
        <fullName>NEDD8-activating enzyme E1 regulatory subunit</fullName>
    </recommendedName>
    <alternativeName>
        <fullName>Amyloid beta precursor protein-binding protein 1, 59 kDa</fullName>
        <shortName>APP-BP1</shortName>
    </alternativeName>
    <alternativeName>
        <fullName>Amyloid protein-binding protein 1</fullName>
    </alternativeName>
</protein>
<evidence type="ECO:0000250" key="1"/>
<evidence type="ECO:0000250" key="2">
    <source>
        <dbReference type="UniProtKB" id="Q13564"/>
    </source>
</evidence>
<evidence type="ECO:0000250" key="3">
    <source>
        <dbReference type="UniProtKB" id="Q8VBW6"/>
    </source>
</evidence>
<evidence type="ECO:0000305" key="4"/>
<sequence length="510" mass="57611">MAQPGKLLKEQKYDRQLRLWGDHGQEALESAHVCLINATATGTEILKNLVLPGIGSFTIIDGNQVSGEDAGNNFFLQRSSIGKSPENLLDNDPSFFCRFTVVVATQLPESTLLRLADVLWNSQIPLLICRTYGLVGYMRIIIKEHPVIESHPDNALEDLRLDKPFPELREHFQSYDLDHMEKKDHSHTPWIVIIAKYLAQWYSETNGRIPKTYKEKEDFRDLIRQGILKNENGAPEDEENFEEAIKNVNTALNTTQIPSSIEDIFNDDRCINITKQTPSFWILARALKEFVAKEGQGNLPVRGTIPDMIADSGKYIKLQNVYREKAKKDAAAVGNHVAKLLQSIGQAPESISEKELKLLCSNSAFLRVVRCRSLAEEYGLDTINKDEIISSMDNPDNEIVLYLMLRAVDRFHKQHGRYPGVSNYQVEEDIGKLKSCLTGFLQEYGLSVMVKDDYVHEFCRYGAAEPHTIAAFLGGAAAQEVIKIITKQFVIFNNTYIYSGMSQTSATFQL</sequence>
<organism>
    <name type="scientific">Macaca fascicularis</name>
    <name type="common">Crab-eating macaque</name>
    <name type="synonym">Cynomolgus monkey</name>
    <dbReference type="NCBI Taxonomy" id="9541"/>
    <lineage>
        <taxon>Eukaryota</taxon>
        <taxon>Metazoa</taxon>
        <taxon>Chordata</taxon>
        <taxon>Craniata</taxon>
        <taxon>Vertebrata</taxon>
        <taxon>Euteleostomi</taxon>
        <taxon>Mammalia</taxon>
        <taxon>Eutheria</taxon>
        <taxon>Euarchontoglires</taxon>
        <taxon>Primates</taxon>
        <taxon>Haplorrhini</taxon>
        <taxon>Catarrhini</taxon>
        <taxon>Cercopithecidae</taxon>
        <taxon>Cercopithecinae</taxon>
        <taxon>Macaca</taxon>
    </lineage>
</organism>
<comment type="function">
    <text evidence="2">Regulatory subunit of the dimeric UBA3-NAE1 E1 enzyme. E1 activates NEDD8 by first adenylating its C-terminal glycine residue with ATP, thereafter linking this residue to the side chain of the catalytic cysteine, yielding a NEDD8-UBA3 thioester and free AMP. E1 finally transfers NEDD8 to the catalytic cysteine of UBE2M. Necessary for cell cycle progression through the S-M checkpoint. Overexpression of NAE1 causes apoptosis through deregulation of NEDD8 conjugation (By similarity). The covalent attachment of NEDD8 to target proteins is known as 'neddylation' and the process is involved in the regulation of cell growth, viability and development.</text>
</comment>
<comment type="activity regulation">
    <text evidence="1">Binding of TP53BP2 to the regulatory subunit NAE1 decreases neddylation activity.</text>
</comment>
<comment type="pathway">
    <text>Protein modification; protein neddylation.</text>
</comment>
<comment type="subunit">
    <text evidence="1">Heterodimer of UBA3 and NAE1. The complex binds NEDD8 and UBE2M. Binds APP and TP53BP2 (By similarity).</text>
</comment>
<comment type="subcellular location">
    <subcellularLocation>
        <location evidence="1">Cell membrane</location>
    </subcellularLocation>
    <text evidence="1">Colocalizes with APP in lipid rafts.</text>
</comment>
<comment type="PTM">
    <text evidence="1">Ubiquitinated by TRIP12, leading to its degradation by the proteasome.</text>
</comment>
<comment type="similarity">
    <text evidence="4">Belongs to the ubiquitin-activating E1 family. ULA1 subfamily.</text>
</comment>
<proteinExistence type="evidence at transcript level"/>
<dbReference type="EMBL" id="AB179250">
    <property type="protein sequence ID" value="BAE02301.1"/>
    <property type="molecule type" value="mRNA"/>
</dbReference>
<dbReference type="RefSeq" id="XP_005592228.1">
    <property type="nucleotide sequence ID" value="XM_005592171.4"/>
</dbReference>
<dbReference type="SMR" id="Q4R3L6"/>
<dbReference type="STRING" id="9541.ENSMFAP00000015224"/>
<dbReference type="GeneID" id="102146039"/>
<dbReference type="KEGG" id="mcf:102146039"/>
<dbReference type="CTD" id="8883"/>
<dbReference type="eggNOG" id="KOG2016">
    <property type="taxonomic scope" value="Eukaryota"/>
</dbReference>
<dbReference type="UniPathway" id="UPA00885"/>
<dbReference type="Proteomes" id="UP000233100">
    <property type="component" value="Unplaced"/>
</dbReference>
<dbReference type="GO" id="GO:0005737">
    <property type="term" value="C:cytoplasm"/>
    <property type="evidence" value="ECO:0007669"/>
    <property type="project" value="TreeGrafter"/>
</dbReference>
<dbReference type="GO" id="GO:0005886">
    <property type="term" value="C:plasma membrane"/>
    <property type="evidence" value="ECO:0007669"/>
    <property type="project" value="UniProtKB-SubCell"/>
</dbReference>
<dbReference type="GO" id="GO:0019781">
    <property type="term" value="F:NEDD8 activating enzyme activity"/>
    <property type="evidence" value="ECO:0007669"/>
    <property type="project" value="InterPro"/>
</dbReference>
<dbReference type="GO" id="GO:0006915">
    <property type="term" value="P:apoptotic process"/>
    <property type="evidence" value="ECO:0007669"/>
    <property type="project" value="UniProtKB-KW"/>
</dbReference>
<dbReference type="GO" id="GO:0045116">
    <property type="term" value="P:protein neddylation"/>
    <property type="evidence" value="ECO:0000250"/>
    <property type="project" value="UniProtKB"/>
</dbReference>
<dbReference type="CDD" id="cd01493">
    <property type="entry name" value="APPBP1_RUB"/>
    <property type="match status" value="1"/>
</dbReference>
<dbReference type="FunFam" id="3.40.50.720:FF:000174">
    <property type="entry name" value="NEDD8-activating enzyme E1 regulatory subunit"/>
    <property type="match status" value="1"/>
</dbReference>
<dbReference type="Gene3D" id="3.40.50.720">
    <property type="entry name" value="NAD(P)-binding Rossmann-like Domain"/>
    <property type="match status" value="3"/>
</dbReference>
<dbReference type="InterPro" id="IPR030667">
    <property type="entry name" value="APP-BP1"/>
</dbReference>
<dbReference type="InterPro" id="IPR045886">
    <property type="entry name" value="ThiF/MoeB/HesA"/>
</dbReference>
<dbReference type="InterPro" id="IPR000594">
    <property type="entry name" value="ThiF_NAD_FAD-bd"/>
</dbReference>
<dbReference type="InterPro" id="IPR035985">
    <property type="entry name" value="Ubiquitin-activating_enz"/>
</dbReference>
<dbReference type="PANTHER" id="PTHR10953:SF29">
    <property type="entry name" value="NEDD8-ACTIVATING ENZYME E1 REGULATORY SUBUNIT"/>
    <property type="match status" value="1"/>
</dbReference>
<dbReference type="PANTHER" id="PTHR10953">
    <property type="entry name" value="UBIQUITIN-ACTIVATING ENZYME E1"/>
    <property type="match status" value="1"/>
</dbReference>
<dbReference type="Pfam" id="PF00899">
    <property type="entry name" value="ThiF"/>
    <property type="match status" value="1"/>
</dbReference>
<dbReference type="PIRSF" id="PIRSF039099">
    <property type="entry name" value="APP-BP1"/>
    <property type="match status" value="1"/>
</dbReference>
<dbReference type="SUPFAM" id="SSF69572">
    <property type="entry name" value="Activating enzymes of the ubiquitin-like proteins"/>
    <property type="match status" value="1"/>
</dbReference>
<gene>
    <name type="primary">NAE1</name>
    <name type="synonym">APPBP1</name>
    <name type="ORF">QtsA-16060</name>
</gene>
<keyword id="KW-0007">Acetylation</keyword>
<keyword id="KW-0053">Apoptosis</keyword>
<keyword id="KW-0131">Cell cycle</keyword>
<keyword id="KW-1003">Cell membrane</keyword>
<keyword id="KW-0472">Membrane</keyword>
<keyword id="KW-1185">Reference proteome</keyword>
<keyword id="KW-0832">Ubl conjugation</keyword>
<keyword id="KW-0833">Ubl conjugation pathway</keyword>
<name>ULA1_MACFA</name>
<reference key="1">
    <citation type="submission" date="2005-06" db="EMBL/GenBank/DDBJ databases">
        <title>DNA sequences of macaque genes expressed in brain or testis and its evolutionary implications.</title>
        <authorList>
            <consortium name="International consortium for macaque cDNA sequencing and analysis"/>
        </authorList>
    </citation>
    <scope>NUCLEOTIDE SEQUENCE [LARGE SCALE MRNA]</scope>
    <source>
        <tissue>Testis</tissue>
    </source>
</reference>
<feature type="initiator methionine" description="Removed" evidence="2">
    <location>
        <position position="1"/>
    </location>
</feature>
<feature type="chain" id="PRO_0000194952" description="NEDD8-activating enzyme E1 regulatory subunit">
    <location>
        <begin position="2"/>
        <end position="510"/>
    </location>
</feature>
<feature type="region of interest" description="Interaction with UBA3" evidence="1">
    <location>
        <begin position="307"/>
        <end position="320"/>
    </location>
</feature>
<feature type="site" description="Interaction with UBA3" evidence="1">
    <location>
        <position position="187"/>
    </location>
</feature>
<feature type="modified residue" description="N-acetylalanine" evidence="2">
    <location>
        <position position="2"/>
    </location>
</feature>
<feature type="modified residue" description="N6-acetyllysine" evidence="2">
    <location>
        <position position="6"/>
    </location>
</feature>
<feature type="modified residue" description="N6-acetyllysine" evidence="3">
    <location>
        <position position="317"/>
    </location>
</feature>
<accession>Q4R3L6</accession>